<sequence>MAGHDSGNARRGRASFGAFVRKPVERDSVANAGQAAEQGSPEATQAWPDDAVEVGAVVDAYGLKGWVKVATHADAGRGGDALLNARRWWLERGAERLSVRIMQSKTRSDTVVAQPAGVSDRDAALSMRGFRVFVRREDFPALAADEFYWVDLIGLEVVNEQSVALGKVSGMIDNGVHSIMRVEYPATGKDGQPTTDERLIPFVGVYVKTVDQAARRIVVDWEADY</sequence>
<organism>
    <name type="scientific">Burkholderia orbicola (strain AU 1054)</name>
    <dbReference type="NCBI Taxonomy" id="331271"/>
    <lineage>
        <taxon>Bacteria</taxon>
        <taxon>Pseudomonadati</taxon>
        <taxon>Pseudomonadota</taxon>
        <taxon>Betaproteobacteria</taxon>
        <taxon>Burkholderiales</taxon>
        <taxon>Burkholderiaceae</taxon>
        <taxon>Burkholderia</taxon>
        <taxon>Burkholderia cepacia complex</taxon>
        <taxon>Burkholderia orbicola</taxon>
    </lineage>
</organism>
<accession>Q1BY03</accession>
<dbReference type="EMBL" id="CP000378">
    <property type="protein sequence ID" value="ABF75502.1"/>
    <property type="molecule type" value="Genomic_DNA"/>
</dbReference>
<dbReference type="SMR" id="Q1BY03"/>
<dbReference type="HOGENOM" id="CLU_077636_1_0_4"/>
<dbReference type="GO" id="GO:0005737">
    <property type="term" value="C:cytoplasm"/>
    <property type="evidence" value="ECO:0007669"/>
    <property type="project" value="UniProtKB-SubCell"/>
</dbReference>
<dbReference type="GO" id="GO:0005840">
    <property type="term" value="C:ribosome"/>
    <property type="evidence" value="ECO:0007669"/>
    <property type="project" value="InterPro"/>
</dbReference>
<dbReference type="GO" id="GO:0043022">
    <property type="term" value="F:ribosome binding"/>
    <property type="evidence" value="ECO:0007669"/>
    <property type="project" value="InterPro"/>
</dbReference>
<dbReference type="GO" id="GO:0042274">
    <property type="term" value="P:ribosomal small subunit biogenesis"/>
    <property type="evidence" value="ECO:0007669"/>
    <property type="project" value="UniProtKB-UniRule"/>
</dbReference>
<dbReference type="GO" id="GO:0006364">
    <property type="term" value="P:rRNA processing"/>
    <property type="evidence" value="ECO:0007669"/>
    <property type="project" value="UniProtKB-UniRule"/>
</dbReference>
<dbReference type="Gene3D" id="2.30.30.240">
    <property type="entry name" value="PRC-barrel domain"/>
    <property type="match status" value="1"/>
</dbReference>
<dbReference type="Gene3D" id="2.40.30.60">
    <property type="entry name" value="RimM"/>
    <property type="match status" value="1"/>
</dbReference>
<dbReference type="HAMAP" id="MF_00014">
    <property type="entry name" value="Ribosome_mat_RimM"/>
    <property type="match status" value="1"/>
</dbReference>
<dbReference type="InterPro" id="IPR011033">
    <property type="entry name" value="PRC_barrel-like_sf"/>
</dbReference>
<dbReference type="InterPro" id="IPR056792">
    <property type="entry name" value="PRC_RimM"/>
</dbReference>
<dbReference type="InterPro" id="IPR011961">
    <property type="entry name" value="RimM"/>
</dbReference>
<dbReference type="InterPro" id="IPR002676">
    <property type="entry name" value="RimM_N"/>
</dbReference>
<dbReference type="InterPro" id="IPR036976">
    <property type="entry name" value="RimM_N_sf"/>
</dbReference>
<dbReference type="InterPro" id="IPR009000">
    <property type="entry name" value="Transl_B-barrel_sf"/>
</dbReference>
<dbReference type="NCBIfam" id="TIGR02273">
    <property type="entry name" value="16S_RimM"/>
    <property type="match status" value="1"/>
</dbReference>
<dbReference type="PANTHER" id="PTHR33692">
    <property type="entry name" value="RIBOSOME MATURATION FACTOR RIMM"/>
    <property type="match status" value="1"/>
</dbReference>
<dbReference type="PANTHER" id="PTHR33692:SF1">
    <property type="entry name" value="RIBOSOME MATURATION FACTOR RIMM"/>
    <property type="match status" value="1"/>
</dbReference>
<dbReference type="Pfam" id="PF24986">
    <property type="entry name" value="PRC_RimM"/>
    <property type="match status" value="1"/>
</dbReference>
<dbReference type="Pfam" id="PF01782">
    <property type="entry name" value="RimM"/>
    <property type="match status" value="1"/>
</dbReference>
<dbReference type="SUPFAM" id="SSF50346">
    <property type="entry name" value="PRC-barrel domain"/>
    <property type="match status" value="1"/>
</dbReference>
<dbReference type="SUPFAM" id="SSF50447">
    <property type="entry name" value="Translation proteins"/>
    <property type="match status" value="1"/>
</dbReference>
<keyword id="KW-0143">Chaperone</keyword>
<keyword id="KW-0963">Cytoplasm</keyword>
<keyword id="KW-0690">Ribosome biogenesis</keyword>
<keyword id="KW-0698">rRNA processing</keyword>
<feature type="chain" id="PRO_0000351729" description="Ribosome maturation factor RimM">
    <location>
        <begin position="1"/>
        <end position="225"/>
    </location>
</feature>
<feature type="domain" description="PRC barrel" evidence="1">
    <location>
        <begin position="144"/>
        <end position="225"/>
    </location>
</feature>
<name>RIMM_BURO1</name>
<evidence type="ECO:0000255" key="1">
    <source>
        <dbReference type="HAMAP-Rule" id="MF_00014"/>
    </source>
</evidence>
<proteinExistence type="inferred from homology"/>
<reference key="1">
    <citation type="submission" date="2006-05" db="EMBL/GenBank/DDBJ databases">
        <title>Complete sequence of chromosome 1 of Burkholderia cenocepacia AU 1054.</title>
        <authorList>
            <consortium name="US DOE Joint Genome Institute"/>
            <person name="Copeland A."/>
            <person name="Lucas S."/>
            <person name="Lapidus A."/>
            <person name="Barry K."/>
            <person name="Detter J.C."/>
            <person name="Glavina del Rio T."/>
            <person name="Hammon N."/>
            <person name="Israni S."/>
            <person name="Dalin E."/>
            <person name="Tice H."/>
            <person name="Pitluck S."/>
            <person name="Chain P."/>
            <person name="Malfatti S."/>
            <person name="Shin M."/>
            <person name="Vergez L."/>
            <person name="Schmutz J."/>
            <person name="Larimer F."/>
            <person name="Land M."/>
            <person name="Hauser L."/>
            <person name="Kyrpides N."/>
            <person name="Lykidis A."/>
            <person name="LiPuma J.J."/>
            <person name="Konstantinidis K."/>
            <person name="Tiedje J.M."/>
            <person name="Richardson P."/>
        </authorList>
    </citation>
    <scope>NUCLEOTIDE SEQUENCE [LARGE SCALE GENOMIC DNA]</scope>
    <source>
        <strain>AU 1054</strain>
    </source>
</reference>
<comment type="function">
    <text evidence="1">An accessory protein needed during the final step in the assembly of 30S ribosomal subunit, possibly for assembly of the head region. Essential for efficient processing of 16S rRNA. May be needed both before and after RbfA during the maturation of 16S rRNA. It has affinity for free ribosomal 30S subunits but not for 70S ribosomes.</text>
</comment>
<comment type="subunit">
    <text evidence="1">Binds ribosomal protein uS19.</text>
</comment>
<comment type="subcellular location">
    <subcellularLocation>
        <location evidence="1">Cytoplasm</location>
    </subcellularLocation>
</comment>
<comment type="domain">
    <text evidence="1">The PRC barrel domain binds ribosomal protein uS19.</text>
</comment>
<comment type="similarity">
    <text evidence="1">Belongs to the RimM family.</text>
</comment>
<protein>
    <recommendedName>
        <fullName evidence="1">Ribosome maturation factor RimM</fullName>
    </recommendedName>
</protein>
<gene>
    <name evidence="1" type="primary">rimM</name>
    <name type="ordered locus">Bcen_0591</name>
</gene>